<dbReference type="EMBL" id="AL009126">
    <property type="protein sequence ID" value="CAB12728.1"/>
    <property type="molecule type" value="Genomic_DNA"/>
</dbReference>
<dbReference type="PIR" id="D69821">
    <property type="entry name" value="D69821"/>
</dbReference>
<dbReference type="RefSeq" id="NP_388781.1">
    <property type="nucleotide sequence ID" value="NC_000964.3"/>
</dbReference>
<dbReference type="RefSeq" id="WP_003233430.1">
    <property type="nucleotide sequence ID" value="NZ_OZ025638.1"/>
</dbReference>
<dbReference type="SMR" id="O31593"/>
<dbReference type="FunCoup" id="O31593">
    <property type="interactions" value="17"/>
</dbReference>
<dbReference type="STRING" id="224308.BSU09000"/>
<dbReference type="PaxDb" id="224308-BSU09000"/>
<dbReference type="EnsemblBacteria" id="CAB12728">
    <property type="protein sequence ID" value="CAB12728"/>
    <property type="gene ID" value="BSU_09000"/>
</dbReference>
<dbReference type="GeneID" id="936216"/>
<dbReference type="KEGG" id="bsu:BSU09000"/>
<dbReference type="PATRIC" id="fig|224308.43.peg.943"/>
<dbReference type="eggNOG" id="COG1566">
    <property type="taxonomic scope" value="Bacteria"/>
</dbReference>
<dbReference type="InParanoid" id="O31593"/>
<dbReference type="OrthoDB" id="9811754at2"/>
<dbReference type="PhylomeDB" id="O31593"/>
<dbReference type="BioCyc" id="BSUB:BSU09000-MONOMER"/>
<dbReference type="Proteomes" id="UP000001570">
    <property type="component" value="Chromosome"/>
</dbReference>
<dbReference type="GO" id="GO:0005886">
    <property type="term" value="C:plasma membrane"/>
    <property type="evidence" value="ECO:0007669"/>
    <property type="project" value="UniProtKB-SubCell"/>
</dbReference>
<dbReference type="Gene3D" id="2.40.30.170">
    <property type="match status" value="1"/>
</dbReference>
<dbReference type="Gene3D" id="2.40.50.100">
    <property type="match status" value="1"/>
</dbReference>
<dbReference type="InterPro" id="IPR043602">
    <property type="entry name" value="CusB-like_dom_1"/>
</dbReference>
<dbReference type="InterPro" id="IPR050739">
    <property type="entry name" value="MFP"/>
</dbReference>
<dbReference type="InterPro" id="IPR011053">
    <property type="entry name" value="Single_hybrid_motif"/>
</dbReference>
<dbReference type="PANTHER" id="PTHR30386">
    <property type="entry name" value="MEMBRANE FUSION SUBUNIT OF EMRAB-TOLC MULTIDRUG EFFLUX PUMP"/>
    <property type="match status" value="1"/>
</dbReference>
<dbReference type="PANTHER" id="PTHR30386:SF26">
    <property type="entry name" value="TRANSPORT PROTEIN COMB"/>
    <property type="match status" value="1"/>
</dbReference>
<dbReference type="Pfam" id="PF00529">
    <property type="entry name" value="CusB_dom_1"/>
    <property type="match status" value="1"/>
</dbReference>
<dbReference type="Pfam" id="PF13437">
    <property type="entry name" value="HlyD_3"/>
    <property type="match status" value="1"/>
</dbReference>
<dbReference type="SUPFAM" id="SSF51230">
    <property type="entry name" value="Single hybrid motif"/>
    <property type="match status" value="1"/>
</dbReference>
<sequence>MIEDETKGENKMNRGRLILTNIIGLIVVLAIIAGGAYYYYQSTNYVKTDEAKVAGDMAAITAPAAGKVSDWDLDEGKTVKKGDTVAKIKGEQTVDVKSIMDGTIVKNEVKNGQTVQAGTTIAQTIDMDNLYITANIKETDIADIEVGNSVDVVVDGDPDTTFDGTVEEIGYATNSTFDMLPSTNSSGNYTKVTQKVPVKISIKNPSDKVLPGMNASVKISE</sequence>
<reference key="1">
    <citation type="journal article" date="1997" name="Nature">
        <title>The complete genome sequence of the Gram-positive bacterium Bacillus subtilis.</title>
        <authorList>
            <person name="Kunst F."/>
            <person name="Ogasawara N."/>
            <person name="Moszer I."/>
            <person name="Albertini A.M."/>
            <person name="Alloni G."/>
            <person name="Azevedo V."/>
            <person name="Bertero M.G."/>
            <person name="Bessieres P."/>
            <person name="Bolotin A."/>
            <person name="Borchert S."/>
            <person name="Borriss R."/>
            <person name="Boursier L."/>
            <person name="Brans A."/>
            <person name="Braun M."/>
            <person name="Brignell S.C."/>
            <person name="Bron S."/>
            <person name="Brouillet S."/>
            <person name="Bruschi C.V."/>
            <person name="Caldwell B."/>
            <person name="Capuano V."/>
            <person name="Carter N.M."/>
            <person name="Choi S.-K."/>
            <person name="Codani J.-J."/>
            <person name="Connerton I.F."/>
            <person name="Cummings N.J."/>
            <person name="Daniel R.A."/>
            <person name="Denizot F."/>
            <person name="Devine K.M."/>
            <person name="Duesterhoeft A."/>
            <person name="Ehrlich S.D."/>
            <person name="Emmerson P.T."/>
            <person name="Entian K.-D."/>
            <person name="Errington J."/>
            <person name="Fabret C."/>
            <person name="Ferrari E."/>
            <person name="Foulger D."/>
            <person name="Fritz C."/>
            <person name="Fujita M."/>
            <person name="Fujita Y."/>
            <person name="Fuma S."/>
            <person name="Galizzi A."/>
            <person name="Galleron N."/>
            <person name="Ghim S.-Y."/>
            <person name="Glaser P."/>
            <person name="Goffeau A."/>
            <person name="Golightly E.J."/>
            <person name="Grandi G."/>
            <person name="Guiseppi G."/>
            <person name="Guy B.J."/>
            <person name="Haga K."/>
            <person name="Haiech J."/>
            <person name="Harwood C.R."/>
            <person name="Henaut A."/>
            <person name="Hilbert H."/>
            <person name="Holsappel S."/>
            <person name="Hosono S."/>
            <person name="Hullo M.-F."/>
            <person name="Itaya M."/>
            <person name="Jones L.-M."/>
            <person name="Joris B."/>
            <person name="Karamata D."/>
            <person name="Kasahara Y."/>
            <person name="Klaerr-Blanchard M."/>
            <person name="Klein C."/>
            <person name="Kobayashi Y."/>
            <person name="Koetter P."/>
            <person name="Koningstein G."/>
            <person name="Krogh S."/>
            <person name="Kumano M."/>
            <person name="Kurita K."/>
            <person name="Lapidus A."/>
            <person name="Lardinois S."/>
            <person name="Lauber J."/>
            <person name="Lazarevic V."/>
            <person name="Lee S.-M."/>
            <person name="Levine A."/>
            <person name="Liu H."/>
            <person name="Masuda S."/>
            <person name="Mauel C."/>
            <person name="Medigue C."/>
            <person name="Medina N."/>
            <person name="Mellado R.P."/>
            <person name="Mizuno M."/>
            <person name="Moestl D."/>
            <person name="Nakai S."/>
            <person name="Noback M."/>
            <person name="Noone D."/>
            <person name="O'Reilly M."/>
            <person name="Ogawa K."/>
            <person name="Ogiwara A."/>
            <person name="Oudega B."/>
            <person name="Park S.-H."/>
            <person name="Parro V."/>
            <person name="Pohl T.M."/>
            <person name="Portetelle D."/>
            <person name="Porwollik S."/>
            <person name="Prescott A.M."/>
            <person name="Presecan E."/>
            <person name="Pujic P."/>
            <person name="Purnelle B."/>
            <person name="Rapoport G."/>
            <person name="Rey M."/>
            <person name="Reynolds S."/>
            <person name="Rieger M."/>
            <person name="Rivolta C."/>
            <person name="Rocha E."/>
            <person name="Roche B."/>
            <person name="Rose M."/>
            <person name="Sadaie Y."/>
            <person name="Sato T."/>
            <person name="Scanlan E."/>
            <person name="Schleich S."/>
            <person name="Schroeter R."/>
            <person name="Scoffone F."/>
            <person name="Sekiguchi J."/>
            <person name="Sekowska A."/>
            <person name="Seror S.J."/>
            <person name="Serror P."/>
            <person name="Shin B.-S."/>
            <person name="Soldo B."/>
            <person name="Sorokin A."/>
            <person name="Tacconi E."/>
            <person name="Takagi T."/>
            <person name="Takahashi H."/>
            <person name="Takemaru K."/>
            <person name="Takeuchi M."/>
            <person name="Tamakoshi A."/>
            <person name="Tanaka T."/>
            <person name="Terpstra P."/>
            <person name="Tognoni A."/>
            <person name="Tosato V."/>
            <person name="Uchiyama S."/>
            <person name="Vandenbol M."/>
            <person name="Vannier F."/>
            <person name="Vassarotti A."/>
            <person name="Viari A."/>
            <person name="Wambutt R."/>
            <person name="Wedler E."/>
            <person name="Wedler H."/>
            <person name="Weitzenegger T."/>
            <person name="Winters P."/>
            <person name="Wipat A."/>
            <person name="Yamamoto H."/>
            <person name="Yamane K."/>
            <person name="Yasumoto K."/>
            <person name="Yata K."/>
            <person name="Yoshida K."/>
            <person name="Yoshikawa H.-F."/>
            <person name="Zumstein E."/>
            <person name="Yoshikawa H."/>
            <person name="Danchin A."/>
        </authorList>
    </citation>
    <scope>NUCLEOTIDE SEQUENCE [LARGE SCALE GENOMIC DNA]</scope>
    <source>
        <strain>168</strain>
    </source>
</reference>
<comment type="subcellular location">
    <subcellularLocation>
        <location evidence="2">Cell membrane</location>
        <topology evidence="2">Single-pass membrane protein</topology>
    </subcellularLocation>
</comment>
<comment type="similarity">
    <text evidence="2">Belongs to the membrane fusion protein (MFP) (TC 8.A.1) family.</text>
</comment>
<keyword id="KW-1003">Cell membrane</keyword>
<keyword id="KW-0472">Membrane</keyword>
<keyword id="KW-1185">Reference proteome</keyword>
<keyword id="KW-0812">Transmembrane</keyword>
<keyword id="KW-1133">Transmembrane helix</keyword>
<accession>O31593</accession>
<evidence type="ECO:0000255" key="1"/>
<evidence type="ECO:0000305" key="2"/>
<protein>
    <recommendedName>
        <fullName>Putative efflux system component YhbJ</fullName>
    </recommendedName>
</protein>
<feature type="chain" id="PRO_0000381935" description="Putative efflux system component YhbJ">
    <location>
        <begin position="1"/>
        <end position="221"/>
    </location>
</feature>
<feature type="transmembrane region" description="Helical" evidence="1">
    <location>
        <begin position="17"/>
        <end position="37"/>
    </location>
</feature>
<organism>
    <name type="scientific">Bacillus subtilis (strain 168)</name>
    <dbReference type="NCBI Taxonomy" id="224308"/>
    <lineage>
        <taxon>Bacteria</taxon>
        <taxon>Bacillati</taxon>
        <taxon>Bacillota</taxon>
        <taxon>Bacilli</taxon>
        <taxon>Bacillales</taxon>
        <taxon>Bacillaceae</taxon>
        <taxon>Bacillus</taxon>
    </lineage>
</organism>
<name>YHBJ_BACSU</name>
<gene>
    <name type="primary">yhbJ</name>
    <name type="ordered locus">BSU09000</name>
</gene>
<proteinExistence type="inferred from homology"/>